<feature type="chain" id="PRO_0000247616" description="tRNA-guanine(15) transglycosylase">
    <location>
        <begin position="1"/>
        <end position="585"/>
    </location>
</feature>
<feature type="domain" description="PUA">
    <location>
        <begin position="507"/>
        <end position="582"/>
    </location>
</feature>
<feature type="active site" description="Nucleophile" evidence="1">
    <location>
        <position position="95"/>
    </location>
</feature>
<feature type="binding site" evidence="1">
    <location>
        <position position="130"/>
    </location>
    <ligand>
        <name>substrate</name>
    </ligand>
</feature>
<feature type="binding site" evidence="1">
    <location>
        <position position="196"/>
    </location>
    <ligand>
        <name>substrate</name>
    </ligand>
</feature>
<feature type="binding site" evidence="1">
    <location>
        <position position="279"/>
    </location>
    <ligand>
        <name>Zn(2+)</name>
        <dbReference type="ChEBI" id="CHEBI:29105"/>
    </ligand>
</feature>
<feature type="binding site" evidence="1">
    <location>
        <position position="281"/>
    </location>
    <ligand>
        <name>Zn(2+)</name>
        <dbReference type="ChEBI" id="CHEBI:29105"/>
    </ligand>
</feature>
<feature type="binding site" evidence="1">
    <location>
        <position position="284"/>
    </location>
    <ligand>
        <name>Zn(2+)</name>
        <dbReference type="ChEBI" id="CHEBI:29105"/>
    </ligand>
</feature>
<sequence length="585" mass="66941">MSRGDSMLRFEIKDRDAAGRIGKLEVNGKKIETPAIMPVVNPKQLIVEPKELKRMGFDIIITNSYIIYKDKKLREKALEKGIHRLLDYDGIIEVDSGSFQLMRYGKVEVTNREIVEFQHKIGVDIGTFLDIPTPPDAPREKAEQDLKITLERAKEAESIKQIPMNATVQGSTYLDLRKLAARKLSEMNFEIHPIGAVVPLLESYRFKDVVDIVIASKMGLRPDRPVHLFGAGHPMVFALAVAMGVDLFDSASYALYAKDDRYLTPQGTKRLEELEYFSCSCPVCSKYTPQELREMPKEEREKLLALHNLWVIREEINRVKQAIKEGELWRLVDERARAHPKLYAAYKRLLEYYHYLEEYEPITKKSAFFKISEESLKWPIARRAKERAEKVKAKFPESIPHPIFGEIPKYLSLTYPFAQSESEEDFQIEKPTRENAILYIMAIAEYQFGEGAGEAFRDAEVEIAKTGMPRQVKKNGKRLATVRAEDGLLTLGIEGAKRLHELLPYPVMRVVVNKEAEPFARKGKDVFAKFVEFADPKIRPYDEVLIVNENDELLATGQALLSGREMVLFSSGRAVKTRRGVEEKK</sequence>
<gene>
    <name evidence="1" type="primary">tgtA</name>
    <name type="ordered locus">PF1046</name>
</gene>
<reference key="1">
    <citation type="journal article" date="1999" name="Genetics">
        <title>Divergence of the hyperthermophilic archaea Pyrococcus furiosus and P. horikoshii inferred from complete genomic sequences.</title>
        <authorList>
            <person name="Maeder D.L."/>
            <person name="Weiss R.B."/>
            <person name="Dunn D.M."/>
            <person name="Cherry J.L."/>
            <person name="Gonzalez J.M."/>
            <person name="DiRuggiero J."/>
            <person name="Robb F.T."/>
        </authorList>
    </citation>
    <scope>NUCLEOTIDE SEQUENCE [LARGE SCALE GENOMIC DNA]</scope>
    <source>
        <strain>ATCC 43587 / DSM 3638 / JCM 8422 / Vc1</strain>
    </source>
</reference>
<reference key="2">
    <citation type="journal article" date="2006" name="J. Biol. Chem.">
        <title>The RNA-binding PUA domain of archaeal tRNA-guanine transglycosylase is not required for archaeosine formation.</title>
        <authorList>
            <person name="Sabina J."/>
            <person name="Soell D."/>
        </authorList>
    </citation>
    <scope>FUNCTION</scope>
    <scope>CATALYTIC ACTIVITY</scope>
    <scope>INFLUENCE OF C-TERMINAL EXTENSION</scope>
    <scope>BIOPHYSICOCHEMICAL PROPERTIES</scope>
</reference>
<proteinExistence type="evidence at protein level"/>
<keyword id="KW-0328">Glycosyltransferase</keyword>
<keyword id="KW-0479">Metal-binding</keyword>
<keyword id="KW-1185">Reference proteome</keyword>
<keyword id="KW-0808">Transferase</keyword>
<keyword id="KW-0819">tRNA processing</keyword>
<keyword id="KW-0862">Zinc</keyword>
<accession>Q8TH08</accession>
<name>ATGT_PYRFU</name>
<evidence type="ECO:0000255" key="1">
    <source>
        <dbReference type="HAMAP-Rule" id="MF_01634"/>
    </source>
</evidence>
<evidence type="ECO:0000269" key="2">
    <source>
    </source>
</evidence>
<dbReference type="EC" id="2.4.2.48" evidence="2"/>
<dbReference type="EMBL" id="AE009950">
    <property type="protein sequence ID" value="AAL81170.1"/>
    <property type="molecule type" value="Genomic_DNA"/>
</dbReference>
<dbReference type="RefSeq" id="WP_011012183.1">
    <property type="nucleotide sequence ID" value="NZ_CP023154.1"/>
</dbReference>
<dbReference type="SMR" id="Q8TH08"/>
<dbReference type="IntAct" id="Q8TH08">
    <property type="interactions" value="1"/>
</dbReference>
<dbReference type="STRING" id="186497.PF1046"/>
<dbReference type="PaxDb" id="186497-PF1046"/>
<dbReference type="GeneID" id="41712857"/>
<dbReference type="KEGG" id="pfu:PF1046"/>
<dbReference type="PATRIC" id="fig|186497.12.peg.1107"/>
<dbReference type="eggNOG" id="arCOG00989">
    <property type="taxonomic scope" value="Archaea"/>
</dbReference>
<dbReference type="eggNOG" id="arCOG00991">
    <property type="taxonomic scope" value="Archaea"/>
</dbReference>
<dbReference type="HOGENOM" id="CLU_030083_0_0_2"/>
<dbReference type="OrthoDB" id="6871at2157"/>
<dbReference type="PhylomeDB" id="Q8TH08"/>
<dbReference type="UniPathway" id="UPA00393"/>
<dbReference type="Proteomes" id="UP000001013">
    <property type="component" value="Chromosome"/>
</dbReference>
<dbReference type="GO" id="GO:0005737">
    <property type="term" value="C:cytoplasm"/>
    <property type="evidence" value="ECO:0007669"/>
    <property type="project" value="TreeGrafter"/>
</dbReference>
<dbReference type="GO" id="GO:0016763">
    <property type="term" value="F:pentosyltransferase activity"/>
    <property type="evidence" value="ECO:0007669"/>
    <property type="project" value="UniProtKB-UniRule"/>
</dbReference>
<dbReference type="GO" id="GO:0003723">
    <property type="term" value="F:RNA binding"/>
    <property type="evidence" value="ECO:0007669"/>
    <property type="project" value="InterPro"/>
</dbReference>
<dbReference type="GO" id="GO:0008270">
    <property type="term" value="F:zinc ion binding"/>
    <property type="evidence" value="ECO:0007669"/>
    <property type="project" value="UniProtKB-UniRule"/>
</dbReference>
<dbReference type="GO" id="GO:0002099">
    <property type="term" value="P:tRNA wobble guanine modification"/>
    <property type="evidence" value="ECO:0007669"/>
    <property type="project" value="TreeGrafter"/>
</dbReference>
<dbReference type="CDD" id="cd21149">
    <property type="entry name" value="PUA_archaeosine_TGT"/>
    <property type="match status" value="1"/>
</dbReference>
<dbReference type="Gene3D" id="3.90.1020.10">
    <property type="entry name" value="ArcTGT, C1 domain"/>
    <property type="match status" value="1"/>
</dbReference>
<dbReference type="Gene3D" id="3.10.450.90">
    <property type="entry name" value="ArcTGT, C2 domain"/>
    <property type="match status" value="1"/>
</dbReference>
<dbReference type="Gene3D" id="2.30.130.10">
    <property type="entry name" value="PUA domain"/>
    <property type="match status" value="1"/>
</dbReference>
<dbReference type="Gene3D" id="3.20.20.105">
    <property type="entry name" value="Queuine tRNA-ribosyltransferase-like"/>
    <property type="match status" value="1"/>
</dbReference>
<dbReference type="HAMAP" id="MF_01634">
    <property type="entry name" value="TgtA_arch"/>
    <property type="match status" value="1"/>
</dbReference>
<dbReference type="InterPro" id="IPR050076">
    <property type="entry name" value="ArchSynthase1/Queuine_TRR"/>
</dbReference>
<dbReference type="InterPro" id="IPR038370">
    <property type="entry name" value="ArcTGT_C1_sf"/>
</dbReference>
<dbReference type="InterPro" id="IPR002478">
    <property type="entry name" value="PUA"/>
</dbReference>
<dbReference type="InterPro" id="IPR015947">
    <property type="entry name" value="PUA-like_sf"/>
</dbReference>
<dbReference type="InterPro" id="IPR036974">
    <property type="entry name" value="PUA_sf"/>
</dbReference>
<dbReference type="InterPro" id="IPR036511">
    <property type="entry name" value="TGT-like_sf"/>
</dbReference>
<dbReference type="InterPro" id="IPR032729">
    <property type="entry name" value="TGT_C1"/>
</dbReference>
<dbReference type="InterPro" id="IPR029402">
    <property type="entry name" value="TGT_C2"/>
</dbReference>
<dbReference type="InterPro" id="IPR038250">
    <property type="entry name" value="TGT_C2_sf"/>
</dbReference>
<dbReference type="InterPro" id="IPR004804">
    <property type="entry name" value="TgtA"/>
</dbReference>
<dbReference type="InterPro" id="IPR002616">
    <property type="entry name" value="tRNA_ribo_trans-like"/>
</dbReference>
<dbReference type="InterPro" id="IPR004521">
    <property type="entry name" value="Uncharacterised_CHP00451"/>
</dbReference>
<dbReference type="NCBIfam" id="TIGR00432">
    <property type="entry name" value="arcsn_tRNA_tgt"/>
    <property type="match status" value="1"/>
</dbReference>
<dbReference type="NCBIfam" id="TIGR00449">
    <property type="entry name" value="tgt_general"/>
    <property type="match status" value="1"/>
</dbReference>
<dbReference type="NCBIfam" id="TIGR00451">
    <property type="entry name" value="unchar_dom_2"/>
    <property type="match status" value="1"/>
</dbReference>
<dbReference type="PANTHER" id="PTHR46499">
    <property type="entry name" value="QUEUINE TRNA-RIBOSYLTRANSFERASE"/>
    <property type="match status" value="1"/>
</dbReference>
<dbReference type="PANTHER" id="PTHR46499:SF1">
    <property type="entry name" value="QUEUINE TRNA-RIBOSYLTRANSFERASE"/>
    <property type="match status" value="1"/>
</dbReference>
<dbReference type="Pfam" id="PF01472">
    <property type="entry name" value="PUA"/>
    <property type="match status" value="1"/>
</dbReference>
<dbReference type="Pfam" id="PF01702">
    <property type="entry name" value="TGT"/>
    <property type="match status" value="1"/>
</dbReference>
<dbReference type="Pfam" id="PF14809">
    <property type="entry name" value="TGT_C1"/>
    <property type="match status" value="1"/>
</dbReference>
<dbReference type="Pfam" id="PF14810">
    <property type="entry name" value="TGT_C2"/>
    <property type="match status" value="1"/>
</dbReference>
<dbReference type="SMART" id="SM00359">
    <property type="entry name" value="PUA"/>
    <property type="match status" value="1"/>
</dbReference>
<dbReference type="SUPFAM" id="SSF88802">
    <property type="entry name" value="Pre-PUA domain"/>
    <property type="match status" value="1"/>
</dbReference>
<dbReference type="SUPFAM" id="SSF88697">
    <property type="entry name" value="PUA domain-like"/>
    <property type="match status" value="1"/>
</dbReference>
<dbReference type="SUPFAM" id="SSF51713">
    <property type="entry name" value="tRNA-guanine transglycosylase"/>
    <property type="match status" value="1"/>
</dbReference>
<dbReference type="PROSITE" id="PS50890">
    <property type="entry name" value="PUA"/>
    <property type="match status" value="1"/>
</dbReference>
<protein>
    <recommendedName>
        <fullName evidence="1">tRNA-guanine(15) transglycosylase</fullName>
        <ecNumber evidence="2">2.4.2.48</ecNumber>
    </recommendedName>
    <alternativeName>
        <fullName evidence="1">7-cyano-7-deazaguanine tRNA-ribosyltransferase</fullName>
    </alternativeName>
    <alternativeName>
        <fullName evidence="1">Archaeal tRNA-guanine transglycosylase</fullName>
    </alternativeName>
</protein>
<comment type="function">
    <text evidence="2">Exchanges the guanine residue with 7-cyano-7-deazaguanine (preQ0) at position 15 in the dihydrouridine loop (D-loop) of archaeal tRNAs.</text>
</comment>
<comment type="catalytic activity">
    <reaction evidence="2">
        <text>guanosine(15) in tRNA + 7-cyano-7-deazaguanine = 7-cyano-7-carbaguanosine(15) in tRNA + guanine</text>
        <dbReference type="Rhea" id="RHEA:43164"/>
        <dbReference type="Rhea" id="RHEA-COMP:10371"/>
        <dbReference type="Rhea" id="RHEA-COMP:10372"/>
        <dbReference type="ChEBI" id="CHEBI:16235"/>
        <dbReference type="ChEBI" id="CHEBI:45075"/>
        <dbReference type="ChEBI" id="CHEBI:74269"/>
        <dbReference type="ChEBI" id="CHEBI:82850"/>
        <dbReference type="EC" id="2.4.2.48"/>
    </reaction>
</comment>
<comment type="cofactor">
    <cofactor evidence="1">
        <name>Zn(2+)</name>
        <dbReference type="ChEBI" id="CHEBI:29105"/>
    </cofactor>
    <text evidence="1">Binds 1 zinc ion per subunit.</text>
</comment>
<comment type="biophysicochemical properties">
    <kinetics>
        <KM evidence="2">0.16 uM for tRNA-Asp</KM>
    </kinetics>
</comment>
<comment type="pathway">
    <text evidence="1">tRNA modification; archaeosine-tRNA biosynthesis.</text>
</comment>
<comment type="similarity">
    <text evidence="1">Belongs to the archaeosine tRNA-ribosyltransferase family.</text>
</comment>
<organism>
    <name type="scientific">Pyrococcus furiosus (strain ATCC 43587 / DSM 3638 / JCM 8422 / Vc1)</name>
    <dbReference type="NCBI Taxonomy" id="186497"/>
    <lineage>
        <taxon>Archaea</taxon>
        <taxon>Methanobacteriati</taxon>
        <taxon>Methanobacteriota</taxon>
        <taxon>Thermococci</taxon>
        <taxon>Thermococcales</taxon>
        <taxon>Thermococcaceae</taxon>
        <taxon>Pyrococcus</taxon>
    </lineage>
</organism>